<proteinExistence type="inferred from homology"/>
<feature type="chain" id="PRO_0000243567" description="Glutamate-1-semialdehyde 2,1-aminomutase">
    <location>
        <begin position="1"/>
        <end position="427"/>
    </location>
</feature>
<feature type="modified residue" description="N6-(pyridoxal phosphate)lysine" evidence="1">
    <location>
        <position position="266"/>
    </location>
</feature>
<protein>
    <recommendedName>
        <fullName evidence="1">Glutamate-1-semialdehyde 2,1-aminomutase</fullName>
        <shortName evidence="1">GSA</shortName>
        <ecNumber evidence="1">5.4.3.8</ecNumber>
    </recommendedName>
    <alternativeName>
        <fullName evidence="1">Glutamate-1-semialdehyde aminotransferase</fullName>
        <shortName evidence="1">GSA-AT</shortName>
    </alternativeName>
</protein>
<sequence>MTSRNQQLFERAQRHIPGGVNSPVRAFRSVGGTPCFFQKGVGAKVQDADGKWYTDYVGSWGPMILGHAHPDVIAAVQAAVVDGLSFGAPTEKEVDIADLLCELVPSMDMVRLVSSGTEATMSAIRLARGHTGRDVLIKFEGCYHGHSDGLLVKAGSGLLTFGNPSSSGVPAGTAETTMVLTYNDPQELADAFAKHGDKIAAVIVEPVVGNMNLIAPTQAFLNAMRDLCTKNGSVLIFDEVMTGFRVGLKSAQGLFGITPDLSTFGKVVGGGMPLGAFGGKREIMEKIAPLGPVYQAGTLSGNPIATAAGLATLKLIQAPGFYEALTAKTKALCDGLVAAAKKHGVAFSAQNIGGMFGLYFAEQCPGTYDEVLACDKEAFNRFFHAMLDAGHYFAPSAFEAGFVSAAHSDADIAGTIAAADAYFASLK</sequence>
<comment type="catalytic activity">
    <reaction evidence="1">
        <text>(S)-4-amino-5-oxopentanoate = 5-aminolevulinate</text>
        <dbReference type="Rhea" id="RHEA:14265"/>
        <dbReference type="ChEBI" id="CHEBI:57501"/>
        <dbReference type="ChEBI" id="CHEBI:356416"/>
        <dbReference type="EC" id="5.4.3.8"/>
    </reaction>
</comment>
<comment type="cofactor">
    <cofactor evidence="1">
        <name>pyridoxal 5'-phosphate</name>
        <dbReference type="ChEBI" id="CHEBI:597326"/>
    </cofactor>
</comment>
<comment type="pathway">
    <text evidence="1">Porphyrin-containing compound metabolism; protoporphyrin-IX biosynthesis; 5-aminolevulinate from L-glutamyl-tRNA(Glu): step 2/2.</text>
</comment>
<comment type="subunit">
    <text evidence="1">Homodimer.</text>
</comment>
<comment type="subcellular location">
    <subcellularLocation>
        <location evidence="1">Cytoplasm</location>
    </subcellularLocation>
</comment>
<comment type="similarity">
    <text evidence="1">Belongs to the class-III pyridoxal-phosphate-dependent aminotransferase family. HemL subfamily.</text>
</comment>
<accession>Q478V1</accession>
<name>GSA_DECAR</name>
<gene>
    <name evidence="1" type="primary">hemL</name>
    <name type="ordered locus">Daro_3902</name>
</gene>
<reference key="1">
    <citation type="journal article" date="2009" name="BMC Genomics">
        <title>Metabolic analysis of the soil microbe Dechloromonas aromatica str. RCB: indications of a surprisingly complex life-style and cryptic anaerobic pathways for aromatic degradation.</title>
        <authorList>
            <person name="Salinero K.K."/>
            <person name="Keller K."/>
            <person name="Feil W.S."/>
            <person name="Feil H."/>
            <person name="Trong S."/>
            <person name="Di Bartolo G."/>
            <person name="Lapidus A."/>
        </authorList>
    </citation>
    <scope>NUCLEOTIDE SEQUENCE [LARGE SCALE GENOMIC DNA]</scope>
    <source>
        <strain>RCB</strain>
    </source>
</reference>
<keyword id="KW-0963">Cytoplasm</keyword>
<keyword id="KW-0413">Isomerase</keyword>
<keyword id="KW-0627">Porphyrin biosynthesis</keyword>
<keyword id="KW-0663">Pyridoxal phosphate</keyword>
<organism>
    <name type="scientific">Dechloromonas aromatica (strain RCB)</name>
    <dbReference type="NCBI Taxonomy" id="159087"/>
    <lineage>
        <taxon>Bacteria</taxon>
        <taxon>Pseudomonadati</taxon>
        <taxon>Pseudomonadota</taxon>
        <taxon>Betaproteobacteria</taxon>
        <taxon>Rhodocyclales</taxon>
        <taxon>Azonexaceae</taxon>
        <taxon>Dechloromonas</taxon>
    </lineage>
</organism>
<evidence type="ECO:0000255" key="1">
    <source>
        <dbReference type="HAMAP-Rule" id="MF_00375"/>
    </source>
</evidence>
<dbReference type="EC" id="5.4.3.8" evidence="1"/>
<dbReference type="EMBL" id="CP000089">
    <property type="protein sequence ID" value="AAZ48630.1"/>
    <property type="molecule type" value="Genomic_DNA"/>
</dbReference>
<dbReference type="SMR" id="Q478V1"/>
<dbReference type="STRING" id="159087.Daro_3902"/>
<dbReference type="KEGG" id="dar:Daro_3902"/>
<dbReference type="eggNOG" id="COG0001">
    <property type="taxonomic scope" value="Bacteria"/>
</dbReference>
<dbReference type="HOGENOM" id="CLU_016922_1_5_4"/>
<dbReference type="OrthoDB" id="3398487at2"/>
<dbReference type="UniPathway" id="UPA00251">
    <property type="reaction ID" value="UER00317"/>
</dbReference>
<dbReference type="GO" id="GO:0005737">
    <property type="term" value="C:cytoplasm"/>
    <property type="evidence" value="ECO:0007669"/>
    <property type="project" value="UniProtKB-SubCell"/>
</dbReference>
<dbReference type="GO" id="GO:0042286">
    <property type="term" value="F:glutamate-1-semialdehyde 2,1-aminomutase activity"/>
    <property type="evidence" value="ECO:0007669"/>
    <property type="project" value="UniProtKB-UniRule"/>
</dbReference>
<dbReference type="GO" id="GO:0030170">
    <property type="term" value="F:pyridoxal phosphate binding"/>
    <property type="evidence" value="ECO:0007669"/>
    <property type="project" value="InterPro"/>
</dbReference>
<dbReference type="GO" id="GO:0008483">
    <property type="term" value="F:transaminase activity"/>
    <property type="evidence" value="ECO:0007669"/>
    <property type="project" value="InterPro"/>
</dbReference>
<dbReference type="GO" id="GO:0006782">
    <property type="term" value="P:protoporphyrinogen IX biosynthetic process"/>
    <property type="evidence" value="ECO:0007669"/>
    <property type="project" value="UniProtKB-UniRule"/>
</dbReference>
<dbReference type="CDD" id="cd00610">
    <property type="entry name" value="OAT_like"/>
    <property type="match status" value="1"/>
</dbReference>
<dbReference type="FunFam" id="3.40.640.10:FF:000021">
    <property type="entry name" value="Glutamate-1-semialdehyde 2,1-aminomutase"/>
    <property type="match status" value="1"/>
</dbReference>
<dbReference type="Gene3D" id="3.90.1150.10">
    <property type="entry name" value="Aspartate Aminotransferase, domain 1"/>
    <property type="match status" value="1"/>
</dbReference>
<dbReference type="Gene3D" id="3.40.640.10">
    <property type="entry name" value="Type I PLP-dependent aspartate aminotransferase-like (Major domain)"/>
    <property type="match status" value="1"/>
</dbReference>
<dbReference type="HAMAP" id="MF_00375">
    <property type="entry name" value="HemL_aminotrans_3"/>
    <property type="match status" value="1"/>
</dbReference>
<dbReference type="InterPro" id="IPR004639">
    <property type="entry name" value="4pyrrol_synth_GluAld_NH2Trfase"/>
</dbReference>
<dbReference type="InterPro" id="IPR005814">
    <property type="entry name" value="Aminotrans_3"/>
</dbReference>
<dbReference type="InterPro" id="IPR049704">
    <property type="entry name" value="Aminotrans_3_PPA_site"/>
</dbReference>
<dbReference type="InterPro" id="IPR015424">
    <property type="entry name" value="PyrdxlP-dep_Trfase"/>
</dbReference>
<dbReference type="InterPro" id="IPR015421">
    <property type="entry name" value="PyrdxlP-dep_Trfase_major"/>
</dbReference>
<dbReference type="InterPro" id="IPR015422">
    <property type="entry name" value="PyrdxlP-dep_Trfase_small"/>
</dbReference>
<dbReference type="NCBIfam" id="TIGR00713">
    <property type="entry name" value="hemL"/>
    <property type="match status" value="1"/>
</dbReference>
<dbReference type="NCBIfam" id="NF000818">
    <property type="entry name" value="PRK00062.1"/>
    <property type="match status" value="1"/>
</dbReference>
<dbReference type="PANTHER" id="PTHR43713">
    <property type="entry name" value="GLUTAMATE-1-SEMIALDEHYDE 2,1-AMINOMUTASE"/>
    <property type="match status" value="1"/>
</dbReference>
<dbReference type="PANTHER" id="PTHR43713:SF3">
    <property type="entry name" value="GLUTAMATE-1-SEMIALDEHYDE 2,1-AMINOMUTASE 1, CHLOROPLASTIC-RELATED"/>
    <property type="match status" value="1"/>
</dbReference>
<dbReference type="Pfam" id="PF00202">
    <property type="entry name" value="Aminotran_3"/>
    <property type="match status" value="1"/>
</dbReference>
<dbReference type="SUPFAM" id="SSF53383">
    <property type="entry name" value="PLP-dependent transferases"/>
    <property type="match status" value="1"/>
</dbReference>
<dbReference type="PROSITE" id="PS00600">
    <property type="entry name" value="AA_TRANSFER_CLASS_3"/>
    <property type="match status" value="1"/>
</dbReference>